<keyword id="KW-0378">Hydrolase</keyword>
<keyword id="KW-0479">Metal-binding</keyword>
<keyword id="KW-0546">Nucleotide metabolism</keyword>
<keyword id="KW-1185">Reference proteome</keyword>
<keyword id="KW-0862">Zinc</keyword>
<name>ADD_PSET1</name>
<sequence length="333" mass="36394">MINRKLPLLDIHRHLDGNVRAQTILELGRQFNITLPADNVAALIPHVQVIDPEPNLMAFLQKLDWGVTVLGDYDACRRIAIENIEDAQAQGLDYVELRFSPYYMAQSQGLHPQGVVEAVIDGIKSATKGANVKANLIGILSRTYGVKVCQQELDALLAFKDDLVAVDLAGDEIGFPGELFVEHFKQVHDAYLAATIHAGEALGAPSIWQAINELGASRIGHGVKAIEDIELMNYLRDKRIGIESCLTSNIQTSTVNDLAQHPLKQFLDHGILACINTDDPAVEGIEIEHEYLVAAPQAGLSQADIEKAQANALEIAYLSYSDKKALLTMASTR</sequence>
<protein>
    <recommendedName>
        <fullName evidence="1">Adenosine deaminase</fullName>
        <ecNumber evidence="1">3.5.4.4</ecNumber>
    </recommendedName>
    <alternativeName>
        <fullName evidence="1">Adenosine aminohydrolase</fullName>
    </alternativeName>
</protein>
<gene>
    <name evidence="1" type="primary">add</name>
    <name type="ordered locus">PSHAa0102</name>
</gene>
<proteinExistence type="inferred from homology"/>
<accession>Q3IF68</accession>
<reference key="1">
    <citation type="journal article" date="2005" name="Genome Res.">
        <title>Coping with cold: the genome of the versatile marine Antarctica bacterium Pseudoalteromonas haloplanktis TAC125.</title>
        <authorList>
            <person name="Medigue C."/>
            <person name="Krin E."/>
            <person name="Pascal G."/>
            <person name="Barbe V."/>
            <person name="Bernsel A."/>
            <person name="Bertin P.N."/>
            <person name="Cheung F."/>
            <person name="Cruveiller S."/>
            <person name="D'Amico S."/>
            <person name="Duilio A."/>
            <person name="Fang G."/>
            <person name="Feller G."/>
            <person name="Ho C."/>
            <person name="Mangenot S."/>
            <person name="Marino G."/>
            <person name="Nilsson J."/>
            <person name="Parrilli E."/>
            <person name="Rocha E.P.C."/>
            <person name="Rouy Z."/>
            <person name="Sekowska A."/>
            <person name="Tutino M.L."/>
            <person name="Vallenet D."/>
            <person name="von Heijne G."/>
            <person name="Danchin A."/>
        </authorList>
    </citation>
    <scope>NUCLEOTIDE SEQUENCE [LARGE SCALE GENOMIC DNA]</scope>
    <source>
        <strain>TAC 125</strain>
    </source>
</reference>
<evidence type="ECO:0000255" key="1">
    <source>
        <dbReference type="HAMAP-Rule" id="MF_00540"/>
    </source>
</evidence>
<feature type="chain" id="PRO_1000017681" description="Adenosine deaminase">
    <location>
        <begin position="1"/>
        <end position="333"/>
    </location>
</feature>
<feature type="active site" description="Proton donor" evidence="1">
    <location>
        <position position="200"/>
    </location>
</feature>
<feature type="binding site" evidence="1">
    <location>
        <position position="12"/>
    </location>
    <ligand>
        <name>Zn(2+)</name>
        <dbReference type="ChEBI" id="CHEBI:29105"/>
        <note>catalytic</note>
    </ligand>
</feature>
<feature type="binding site" evidence="1">
    <location>
        <position position="14"/>
    </location>
    <ligand>
        <name>substrate</name>
    </ligand>
</feature>
<feature type="binding site" evidence="1">
    <location>
        <position position="14"/>
    </location>
    <ligand>
        <name>Zn(2+)</name>
        <dbReference type="ChEBI" id="CHEBI:29105"/>
        <note>catalytic</note>
    </ligand>
</feature>
<feature type="binding site" evidence="1">
    <location>
        <position position="16"/>
    </location>
    <ligand>
        <name>substrate</name>
    </ligand>
</feature>
<feature type="binding site" evidence="1">
    <location>
        <position position="170"/>
    </location>
    <ligand>
        <name>substrate</name>
    </ligand>
</feature>
<feature type="binding site" evidence="1">
    <location>
        <position position="197"/>
    </location>
    <ligand>
        <name>Zn(2+)</name>
        <dbReference type="ChEBI" id="CHEBI:29105"/>
        <note>catalytic</note>
    </ligand>
</feature>
<feature type="binding site" evidence="1">
    <location>
        <position position="278"/>
    </location>
    <ligand>
        <name>Zn(2+)</name>
        <dbReference type="ChEBI" id="CHEBI:29105"/>
        <note>catalytic</note>
    </ligand>
</feature>
<feature type="binding site" evidence="1">
    <location>
        <position position="279"/>
    </location>
    <ligand>
        <name>substrate</name>
    </ligand>
</feature>
<feature type="site" description="Important for catalytic activity" evidence="1">
    <location>
        <position position="221"/>
    </location>
</feature>
<organism>
    <name type="scientific">Pseudoalteromonas translucida (strain TAC 125)</name>
    <dbReference type="NCBI Taxonomy" id="326442"/>
    <lineage>
        <taxon>Bacteria</taxon>
        <taxon>Pseudomonadati</taxon>
        <taxon>Pseudomonadota</taxon>
        <taxon>Gammaproteobacteria</taxon>
        <taxon>Alteromonadales</taxon>
        <taxon>Pseudoalteromonadaceae</taxon>
        <taxon>Pseudoalteromonas</taxon>
    </lineage>
</organism>
<comment type="function">
    <text evidence="1">Catalyzes the hydrolytic deamination of adenosine and 2-deoxyadenosine.</text>
</comment>
<comment type="catalytic activity">
    <reaction evidence="1">
        <text>adenosine + H2O + H(+) = inosine + NH4(+)</text>
        <dbReference type="Rhea" id="RHEA:24408"/>
        <dbReference type="ChEBI" id="CHEBI:15377"/>
        <dbReference type="ChEBI" id="CHEBI:15378"/>
        <dbReference type="ChEBI" id="CHEBI:16335"/>
        <dbReference type="ChEBI" id="CHEBI:17596"/>
        <dbReference type="ChEBI" id="CHEBI:28938"/>
        <dbReference type="EC" id="3.5.4.4"/>
    </reaction>
    <physiologicalReaction direction="left-to-right" evidence="1">
        <dbReference type="Rhea" id="RHEA:24409"/>
    </physiologicalReaction>
</comment>
<comment type="catalytic activity">
    <reaction evidence="1">
        <text>2'-deoxyadenosine + H2O + H(+) = 2'-deoxyinosine + NH4(+)</text>
        <dbReference type="Rhea" id="RHEA:28190"/>
        <dbReference type="ChEBI" id="CHEBI:15377"/>
        <dbReference type="ChEBI" id="CHEBI:15378"/>
        <dbReference type="ChEBI" id="CHEBI:17256"/>
        <dbReference type="ChEBI" id="CHEBI:28938"/>
        <dbReference type="ChEBI" id="CHEBI:28997"/>
        <dbReference type="EC" id="3.5.4.4"/>
    </reaction>
    <physiologicalReaction direction="left-to-right" evidence="1">
        <dbReference type="Rhea" id="RHEA:28191"/>
    </physiologicalReaction>
</comment>
<comment type="cofactor">
    <cofactor evidence="1">
        <name>Zn(2+)</name>
        <dbReference type="ChEBI" id="CHEBI:29105"/>
    </cofactor>
    <text evidence="1">Binds 1 zinc ion per subunit.</text>
</comment>
<comment type="similarity">
    <text evidence="1">Belongs to the metallo-dependent hydrolases superfamily. Adenosine and AMP deaminases family. Adenosine deaminase subfamily.</text>
</comment>
<dbReference type="EC" id="3.5.4.4" evidence="1"/>
<dbReference type="EMBL" id="CR954246">
    <property type="protein sequence ID" value="CAI85211.1"/>
    <property type="molecule type" value="Genomic_DNA"/>
</dbReference>
<dbReference type="SMR" id="Q3IF68"/>
<dbReference type="STRING" id="326442.PSHAa0102"/>
<dbReference type="KEGG" id="pha:PSHAa0102"/>
<dbReference type="PATRIC" id="fig|326442.8.peg.101"/>
<dbReference type="eggNOG" id="COG1816">
    <property type="taxonomic scope" value="Bacteria"/>
</dbReference>
<dbReference type="HOGENOM" id="CLU_039228_0_2_6"/>
<dbReference type="BioCyc" id="PHAL326442:PSHA_RS00520-MONOMER"/>
<dbReference type="Proteomes" id="UP000006843">
    <property type="component" value="Chromosome I"/>
</dbReference>
<dbReference type="GO" id="GO:0005829">
    <property type="term" value="C:cytosol"/>
    <property type="evidence" value="ECO:0007669"/>
    <property type="project" value="TreeGrafter"/>
</dbReference>
<dbReference type="GO" id="GO:0046936">
    <property type="term" value="F:2'-deoxyadenosine deaminase activity"/>
    <property type="evidence" value="ECO:0007669"/>
    <property type="project" value="RHEA"/>
</dbReference>
<dbReference type="GO" id="GO:0004000">
    <property type="term" value="F:adenosine deaminase activity"/>
    <property type="evidence" value="ECO:0007669"/>
    <property type="project" value="UniProtKB-UniRule"/>
</dbReference>
<dbReference type="GO" id="GO:0008270">
    <property type="term" value="F:zinc ion binding"/>
    <property type="evidence" value="ECO:0007669"/>
    <property type="project" value="UniProtKB-UniRule"/>
</dbReference>
<dbReference type="GO" id="GO:0006154">
    <property type="term" value="P:adenosine catabolic process"/>
    <property type="evidence" value="ECO:0007669"/>
    <property type="project" value="TreeGrafter"/>
</dbReference>
<dbReference type="GO" id="GO:0043103">
    <property type="term" value="P:hypoxanthine salvage"/>
    <property type="evidence" value="ECO:0007669"/>
    <property type="project" value="TreeGrafter"/>
</dbReference>
<dbReference type="GO" id="GO:0046103">
    <property type="term" value="P:inosine biosynthetic process"/>
    <property type="evidence" value="ECO:0007669"/>
    <property type="project" value="TreeGrafter"/>
</dbReference>
<dbReference type="GO" id="GO:0009117">
    <property type="term" value="P:nucleotide metabolic process"/>
    <property type="evidence" value="ECO:0007669"/>
    <property type="project" value="UniProtKB-KW"/>
</dbReference>
<dbReference type="GO" id="GO:0009168">
    <property type="term" value="P:purine ribonucleoside monophosphate biosynthetic process"/>
    <property type="evidence" value="ECO:0007669"/>
    <property type="project" value="UniProtKB-UniRule"/>
</dbReference>
<dbReference type="FunFam" id="3.20.20.140:FF:000009">
    <property type="entry name" value="Adenosine deaminase"/>
    <property type="match status" value="1"/>
</dbReference>
<dbReference type="Gene3D" id="3.20.20.140">
    <property type="entry name" value="Metal-dependent hydrolases"/>
    <property type="match status" value="1"/>
</dbReference>
<dbReference type="HAMAP" id="MF_00540">
    <property type="entry name" value="A_deaminase"/>
    <property type="match status" value="1"/>
</dbReference>
<dbReference type="InterPro" id="IPR028893">
    <property type="entry name" value="A_deaminase"/>
</dbReference>
<dbReference type="InterPro" id="IPR001365">
    <property type="entry name" value="A_deaminase_dom"/>
</dbReference>
<dbReference type="InterPro" id="IPR006330">
    <property type="entry name" value="Ado/ade_deaminase"/>
</dbReference>
<dbReference type="InterPro" id="IPR032466">
    <property type="entry name" value="Metal_Hydrolase"/>
</dbReference>
<dbReference type="NCBIfam" id="TIGR01430">
    <property type="entry name" value="aden_deam"/>
    <property type="match status" value="1"/>
</dbReference>
<dbReference type="NCBIfam" id="NF006846">
    <property type="entry name" value="PRK09358.1-1"/>
    <property type="match status" value="1"/>
</dbReference>
<dbReference type="PANTHER" id="PTHR11409">
    <property type="entry name" value="ADENOSINE DEAMINASE"/>
    <property type="match status" value="1"/>
</dbReference>
<dbReference type="PANTHER" id="PTHR11409:SF43">
    <property type="entry name" value="ADENOSINE DEAMINASE"/>
    <property type="match status" value="1"/>
</dbReference>
<dbReference type="Pfam" id="PF00962">
    <property type="entry name" value="A_deaminase"/>
    <property type="match status" value="1"/>
</dbReference>
<dbReference type="SUPFAM" id="SSF51556">
    <property type="entry name" value="Metallo-dependent hydrolases"/>
    <property type="match status" value="1"/>
</dbReference>